<feature type="chain" id="PRO_1000090184" description="SsrA-binding protein">
    <location>
        <begin position="1"/>
        <end position="160"/>
    </location>
</feature>
<keyword id="KW-0963">Cytoplasm</keyword>
<keyword id="KW-0694">RNA-binding</keyword>
<sequence length="160" mass="18232">MTKKKAHKPGSATIALNKRARHEYFIEEEFEAGLALQGWEVKSLRAGKANIGDSYVILKDGEAWLFGANFTPMAVASTHVVCDPTRTRKLLLNQRELDSLYGRINREGYTVVALSLYWKNAWCKVKIGVAKGKKQHDKRSDLKEREWQLDKARIMKNAGR</sequence>
<proteinExistence type="inferred from homology"/>
<dbReference type="EMBL" id="FM200053">
    <property type="protein sequence ID" value="CAR60603.1"/>
    <property type="molecule type" value="Genomic_DNA"/>
</dbReference>
<dbReference type="RefSeq" id="WP_001518569.1">
    <property type="nucleotide sequence ID" value="NC_011147.1"/>
</dbReference>
<dbReference type="SMR" id="B5BEA6"/>
<dbReference type="GeneID" id="66757102"/>
<dbReference type="KEGG" id="sek:SSPA2372"/>
<dbReference type="HOGENOM" id="CLU_108953_3_0_6"/>
<dbReference type="Proteomes" id="UP000001869">
    <property type="component" value="Chromosome"/>
</dbReference>
<dbReference type="GO" id="GO:0005829">
    <property type="term" value="C:cytosol"/>
    <property type="evidence" value="ECO:0007669"/>
    <property type="project" value="TreeGrafter"/>
</dbReference>
<dbReference type="GO" id="GO:0003723">
    <property type="term" value="F:RNA binding"/>
    <property type="evidence" value="ECO:0007669"/>
    <property type="project" value="UniProtKB-UniRule"/>
</dbReference>
<dbReference type="GO" id="GO:0070929">
    <property type="term" value="P:trans-translation"/>
    <property type="evidence" value="ECO:0007669"/>
    <property type="project" value="UniProtKB-UniRule"/>
</dbReference>
<dbReference type="CDD" id="cd09294">
    <property type="entry name" value="SmpB"/>
    <property type="match status" value="1"/>
</dbReference>
<dbReference type="FunFam" id="2.40.280.10:FF:000001">
    <property type="entry name" value="SsrA-binding protein"/>
    <property type="match status" value="1"/>
</dbReference>
<dbReference type="Gene3D" id="2.40.280.10">
    <property type="match status" value="1"/>
</dbReference>
<dbReference type="HAMAP" id="MF_00023">
    <property type="entry name" value="SmpB"/>
    <property type="match status" value="1"/>
</dbReference>
<dbReference type="InterPro" id="IPR023620">
    <property type="entry name" value="SmpB"/>
</dbReference>
<dbReference type="InterPro" id="IPR000037">
    <property type="entry name" value="SsrA-bd_prot"/>
</dbReference>
<dbReference type="InterPro" id="IPR020081">
    <property type="entry name" value="SsrA-bd_prot_CS"/>
</dbReference>
<dbReference type="NCBIfam" id="NF003843">
    <property type="entry name" value="PRK05422.1"/>
    <property type="match status" value="1"/>
</dbReference>
<dbReference type="NCBIfam" id="TIGR00086">
    <property type="entry name" value="smpB"/>
    <property type="match status" value="1"/>
</dbReference>
<dbReference type="PANTHER" id="PTHR30308:SF2">
    <property type="entry name" value="SSRA-BINDING PROTEIN"/>
    <property type="match status" value="1"/>
</dbReference>
<dbReference type="PANTHER" id="PTHR30308">
    <property type="entry name" value="TMRNA-BINDING COMPONENT OF TRANS-TRANSLATION TAGGING COMPLEX"/>
    <property type="match status" value="1"/>
</dbReference>
<dbReference type="Pfam" id="PF01668">
    <property type="entry name" value="SmpB"/>
    <property type="match status" value="1"/>
</dbReference>
<dbReference type="SUPFAM" id="SSF74982">
    <property type="entry name" value="Small protein B (SmpB)"/>
    <property type="match status" value="1"/>
</dbReference>
<dbReference type="PROSITE" id="PS01317">
    <property type="entry name" value="SSRP"/>
    <property type="match status" value="1"/>
</dbReference>
<evidence type="ECO:0000255" key="1">
    <source>
        <dbReference type="HAMAP-Rule" id="MF_00023"/>
    </source>
</evidence>
<name>SSRP_SALPK</name>
<gene>
    <name evidence="1" type="primary">smpB</name>
    <name type="ordered locus">SSPA2372</name>
</gene>
<organism>
    <name type="scientific">Salmonella paratyphi A (strain AKU_12601)</name>
    <dbReference type="NCBI Taxonomy" id="554290"/>
    <lineage>
        <taxon>Bacteria</taxon>
        <taxon>Pseudomonadati</taxon>
        <taxon>Pseudomonadota</taxon>
        <taxon>Gammaproteobacteria</taxon>
        <taxon>Enterobacterales</taxon>
        <taxon>Enterobacteriaceae</taxon>
        <taxon>Salmonella</taxon>
    </lineage>
</organism>
<accession>B5BEA6</accession>
<reference key="1">
    <citation type="journal article" date="2009" name="BMC Genomics">
        <title>Pseudogene accumulation in the evolutionary histories of Salmonella enterica serovars Paratyphi A and Typhi.</title>
        <authorList>
            <person name="Holt K.E."/>
            <person name="Thomson N.R."/>
            <person name="Wain J."/>
            <person name="Langridge G.C."/>
            <person name="Hasan R."/>
            <person name="Bhutta Z.A."/>
            <person name="Quail M.A."/>
            <person name="Norbertczak H."/>
            <person name="Walker D."/>
            <person name="Simmonds M."/>
            <person name="White B."/>
            <person name="Bason N."/>
            <person name="Mungall K."/>
            <person name="Dougan G."/>
            <person name="Parkhill J."/>
        </authorList>
    </citation>
    <scope>NUCLEOTIDE SEQUENCE [LARGE SCALE GENOMIC DNA]</scope>
    <source>
        <strain>AKU_12601</strain>
    </source>
</reference>
<protein>
    <recommendedName>
        <fullName evidence="1">SsrA-binding protein</fullName>
    </recommendedName>
    <alternativeName>
        <fullName evidence="1">Small protein B</fullName>
    </alternativeName>
</protein>
<comment type="function">
    <text evidence="1">Required for rescue of stalled ribosomes mediated by trans-translation. Binds to transfer-messenger RNA (tmRNA), required for stable association of tmRNA with ribosomes. tmRNA and SmpB together mimic tRNA shape, replacing the anticodon stem-loop with SmpB. tmRNA is encoded by the ssrA gene; the 2 termini fold to resemble tRNA(Ala) and it encodes a 'tag peptide', a short internal open reading frame. During trans-translation Ala-aminoacylated tmRNA acts like a tRNA, entering the A-site of stalled ribosomes, displacing the stalled mRNA. The ribosome then switches to translate the ORF on the tmRNA; the nascent peptide is terminated with the 'tag peptide' encoded by the tmRNA and targeted for degradation. The ribosome is freed to recommence translation, which seems to be the essential function of trans-translation.</text>
</comment>
<comment type="subcellular location">
    <subcellularLocation>
        <location evidence="1">Cytoplasm</location>
    </subcellularLocation>
    <text evidence="1">The tmRNA-SmpB complex associates with stalled 70S ribosomes.</text>
</comment>
<comment type="similarity">
    <text evidence="1">Belongs to the SmpB family.</text>
</comment>